<protein>
    <recommendedName>
        <fullName evidence="1">Large ribosomal subunit protein uL13</fullName>
    </recommendedName>
    <alternativeName>
        <fullName evidence="2">50S ribosomal protein L13</fullName>
    </alternativeName>
</protein>
<dbReference type="EMBL" id="BA000016">
    <property type="protein sequence ID" value="BAB82076.1"/>
    <property type="molecule type" value="Genomic_DNA"/>
</dbReference>
<dbReference type="RefSeq" id="WP_011010899.1">
    <property type="nucleotide sequence ID" value="NC_003366.1"/>
</dbReference>
<dbReference type="SMR" id="Q8XHV6"/>
<dbReference type="STRING" id="195102.gene:10491687"/>
<dbReference type="KEGG" id="cpe:CPE2370"/>
<dbReference type="HOGENOM" id="CLU_082184_2_2_9"/>
<dbReference type="Proteomes" id="UP000000818">
    <property type="component" value="Chromosome"/>
</dbReference>
<dbReference type="GO" id="GO:0022625">
    <property type="term" value="C:cytosolic large ribosomal subunit"/>
    <property type="evidence" value="ECO:0007669"/>
    <property type="project" value="TreeGrafter"/>
</dbReference>
<dbReference type="GO" id="GO:0003729">
    <property type="term" value="F:mRNA binding"/>
    <property type="evidence" value="ECO:0007669"/>
    <property type="project" value="TreeGrafter"/>
</dbReference>
<dbReference type="GO" id="GO:0003735">
    <property type="term" value="F:structural constituent of ribosome"/>
    <property type="evidence" value="ECO:0007669"/>
    <property type="project" value="InterPro"/>
</dbReference>
<dbReference type="GO" id="GO:0017148">
    <property type="term" value="P:negative regulation of translation"/>
    <property type="evidence" value="ECO:0007669"/>
    <property type="project" value="TreeGrafter"/>
</dbReference>
<dbReference type="GO" id="GO:0006412">
    <property type="term" value="P:translation"/>
    <property type="evidence" value="ECO:0007669"/>
    <property type="project" value="UniProtKB-UniRule"/>
</dbReference>
<dbReference type="CDD" id="cd00392">
    <property type="entry name" value="Ribosomal_L13"/>
    <property type="match status" value="1"/>
</dbReference>
<dbReference type="FunFam" id="3.90.1180.10:FF:000001">
    <property type="entry name" value="50S ribosomal protein L13"/>
    <property type="match status" value="1"/>
</dbReference>
<dbReference type="Gene3D" id="3.90.1180.10">
    <property type="entry name" value="Ribosomal protein L13"/>
    <property type="match status" value="1"/>
</dbReference>
<dbReference type="HAMAP" id="MF_01366">
    <property type="entry name" value="Ribosomal_uL13"/>
    <property type="match status" value="1"/>
</dbReference>
<dbReference type="InterPro" id="IPR005822">
    <property type="entry name" value="Ribosomal_uL13"/>
</dbReference>
<dbReference type="InterPro" id="IPR005823">
    <property type="entry name" value="Ribosomal_uL13_bac-type"/>
</dbReference>
<dbReference type="InterPro" id="IPR023563">
    <property type="entry name" value="Ribosomal_uL13_CS"/>
</dbReference>
<dbReference type="InterPro" id="IPR036899">
    <property type="entry name" value="Ribosomal_uL13_sf"/>
</dbReference>
<dbReference type="NCBIfam" id="TIGR01066">
    <property type="entry name" value="rplM_bact"/>
    <property type="match status" value="1"/>
</dbReference>
<dbReference type="PANTHER" id="PTHR11545:SF2">
    <property type="entry name" value="LARGE RIBOSOMAL SUBUNIT PROTEIN UL13M"/>
    <property type="match status" value="1"/>
</dbReference>
<dbReference type="PANTHER" id="PTHR11545">
    <property type="entry name" value="RIBOSOMAL PROTEIN L13"/>
    <property type="match status" value="1"/>
</dbReference>
<dbReference type="Pfam" id="PF00572">
    <property type="entry name" value="Ribosomal_L13"/>
    <property type="match status" value="1"/>
</dbReference>
<dbReference type="PIRSF" id="PIRSF002181">
    <property type="entry name" value="Ribosomal_L13"/>
    <property type="match status" value="1"/>
</dbReference>
<dbReference type="SUPFAM" id="SSF52161">
    <property type="entry name" value="Ribosomal protein L13"/>
    <property type="match status" value="1"/>
</dbReference>
<dbReference type="PROSITE" id="PS00783">
    <property type="entry name" value="RIBOSOMAL_L13"/>
    <property type="match status" value="1"/>
</dbReference>
<sequence length="144" mass="16325">MKSYIAKAQEVERKWYVVDAAGKPLGRVASQVASILRGKNKPTFTPNVDCGDFVIVINAEKVVLTGKKLDQKMLRKHSLYAGGLKETPYREVLEKKPEFAFEEAVRRMLPTGVLGRKMLKKLNVYRGAEHNHAAQKPEVLELRY</sequence>
<reference key="1">
    <citation type="journal article" date="2002" name="Proc. Natl. Acad. Sci. U.S.A.">
        <title>Complete genome sequence of Clostridium perfringens, an anaerobic flesh-eater.</title>
        <authorList>
            <person name="Shimizu T."/>
            <person name="Ohtani K."/>
            <person name="Hirakawa H."/>
            <person name="Ohshima K."/>
            <person name="Yamashita A."/>
            <person name="Shiba T."/>
            <person name="Ogasawara N."/>
            <person name="Hattori M."/>
            <person name="Kuhara S."/>
            <person name="Hayashi H."/>
        </authorList>
    </citation>
    <scope>NUCLEOTIDE SEQUENCE [LARGE SCALE GENOMIC DNA]</scope>
    <source>
        <strain>13 / Type A</strain>
    </source>
</reference>
<organism>
    <name type="scientific">Clostridium perfringens (strain 13 / Type A)</name>
    <dbReference type="NCBI Taxonomy" id="195102"/>
    <lineage>
        <taxon>Bacteria</taxon>
        <taxon>Bacillati</taxon>
        <taxon>Bacillota</taxon>
        <taxon>Clostridia</taxon>
        <taxon>Eubacteriales</taxon>
        <taxon>Clostridiaceae</taxon>
        <taxon>Clostridium</taxon>
    </lineage>
</organism>
<comment type="function">
    <text evidence="1">This protein is one of the early assembly proteins of the 50S ribosomal subunit, although it is not seen to bind rRNA by itself. It is important during the early stages of 50S assembly.</text>
</comment>
<comment type="subunit">
    <text evidence="1">Part of the 50S ribosomal subunit.</text>
</comment>
<comment type="similarity">
    <text evidence="1">Belongs to the universal ribosomal protein uL13 family.</text>
</comment>
<feature type="chain" id="PRO_0000261713" description="Large ribosomal subunit protein uL13">
    <location>
        <begin position="1"/>
        <end position="144"/>
    </location>
</feature>
<evidence type="ECO:0000255" key="1">
    <source>
        <dbReference type="HAMAP-Rule" id="MF_01366"/>
    </source>
</evidence>
<evidence type="ECO:0000305" key="2"/>
<name>RL13_CLOPE</name>
<proteinExistence type="inferred from homology"/>
<gene>
    <name evidence="1" type="primary">rplM</name>
    <name type="ordered locus">CPE2370</name>
</gene>
<accession>Q8XHV6</accession>
<keyword id="KW-1185">Reference proteome</keyword>
<keyword id="KW-0687">Ribonucleoprotein</keyword>
<keyword id="KW-0689">Ribosomal protein</keyword>